<reference key="1">
    <citation type="journal article" date="2009" name="BMC Genomics">
        <title>Complete genome sequence of the sugarcane nitrogen-fixing endophyte Gluconacetobacter diazotrophicus Pal5.</title>
        <authorList>
            <person name="Bertalan M."/>
            <person name="Albano R."/>
            <person name="de Padua V."/>
            <person name="Rouws L."/>
            <person name="Rojas C."/>
            <person name="Hemerly A."/>
            <person name="Teixeira K."/>
            <person name="Schwab S."/>
            <person name="Araujo J."/>
            <person name="Oliveira A."/>
            <person name="Franca L."/>
            <person name="Magalhaes V."/>
            <person name="Alqueres S."/>
            <person name="Cardoso A."/>
            <person name="Almeida W."/>
            <person name="Loureiro M.M."/>
            <person name="Nogueira E."/>
            <person name="Cidade D."/>
            <person name="Oliveira D."/>
            <person name="Simao T."/>
            <person name="Macedo J."/>
            <person name="Valadao A."/>
            <person name="Dreschsel M."/>
            <person name="Freitas F."/>
            <person name="Vidal M."/>
            <person name="Guedes H."/>
            <person name="Rodrigues E."/>
            <person name="Meneses C."/>
            <person name="Brioso P."/>
            <person name="Pozzer L."/>
            <person name="Figueiredo D."/>
            <person name="Montano H."/>
            <person name="Junior J."/>
            <person name="de Souza Filho G."/>
            <person name="Martin Quintana Flores V."/>
            <person name="Ferreira B."/>
            <person name="Branco A."/>
            <person name="Gonzalez P."/>
            <person name="Guillobel H."/>
            <person name="Lemos M."/>
            <person name="Seibel L."/>
            <person name="Macedo J."/>
            <person name="Alves-Ferreira M."/>
            <person name="Sachetto-Martins G."/>
            <person name="Coelho A."/>
            <person name="Santos E."/>
            <person name="Amaral G."/>
            <person name="Neves A."/>
            <person name="Pacheco A.B."/>
            <person name="Carvalho D."/>
            <person name="Lery L."/>
            <person name="Bisch P."/>
            <person name="Rossle S.C."/>
            <person name="Urmenyi T."/>
            <person name="Rael Pereira A."/>
            <person name="Silva R."/>
            <person name="Rondinelli E."/>
            <person name="von Kruger W."/>
            <person name="Martins O."/>
            <person name="Baldani J.I."/>
            <person name="Ferreira P.C."/>
        </authorList>
    </citation>
    <scope>NUCLEOTIDE SEQUENCE [LARGE SCALE GENOMIC DNA]</scope>
    <source>
        <strain>ATCC 49037 / DSM 5601 / CCUG 37298 / CIP 103539 / LMG 7603 / PAl5</strain>
    </source>
</reference>
<reference key="2">
    <citation type="journal article" date="2010" name="Stand. Genomic Sci.">
        <title>Two genome sequences of the same bacterial strain, Gluconacetobacter diazotrophicus PAl 5, suggest a new standard in genome sequence submission.</title>
        <authorList>
            <person name="Giongo A."/>
            <person name="Tyler H.L."/>
            <person name="Zipperer U.N."/>
            <person name="Triplett E.W."/>
        </authorList>
    </citation>
    <scope>NUCLEOTIDE SEQUENCE [LARGE SCALE GENOMIC DNA]</scope>
    <source>
        <strain>ATCC 49037 / DSM 5601 / CCUG 37298 / CIP 103539 / LMG 7603 / PAl5</strain>
    </source>
</reference>
<feature type="chain" id="PRO_1000076649" description="Triosephosphate isomerase">
    <location>
        <begin position="1"/>
        <end position="247"/>
    </location>
</feature>
<feature type="active site" description="Electrophile" evidence="1">
    <location>
        <position position="95"/>
    </location>
</feature>
<feature type="active site" description="Proton acceptor" evidence="1">
    <location>
        <position position="162"/>
    </location>
</feature>
<feature type="binding site" evidence="1">
    <location>
        <begin position="8"/>
        <end position="10"/>
    </location>
    <ligand>
        <name>substrate</name>
    </ligand>
</feature>
<feature type="binding site" evidence="1">
    <location>
        <position position="168"/>
    </location>
    <ligand>
        <name>substrate</name>
    </ligand>
</feature>
<feature type="binding site" evidence="1">
    <location>
        <position position="207"/>
    </location>
    <ligand>
        <name>substrate</name>
    </ligand>
</feature>
<proteinExistence type="inferred from homology"/>
<organism>
    <name type="scientific">Gluconacetobacter diazotrophicus (strain ATCC 49037 / DSM 5601 / CCUG 37298 / CIP 103539 / LMG 7603 / PAl5)</name>
    <dbReference type="NCBI Taxonomy" id="272568"/>
    <lineage>
        <taxon>Bacteria</taxon>
        <taxon>Pseudomonadati</taxon>
        <taxon>Pseudomonadota</taxon>
        <taxon>Alphaproteobacteria</taxon>
        <taxon>Acetobacterales</taxon>
        <taxon>Acetobacteraceae</taxon>
        <taxon>Gluconacetobacter</taxon>
    </lineage>
</organism>
<evidence type="ECO:0000255" key="1">
    <source>
        <dbReference type="HAMAP-Rule" id="MF_00147"/>
    </source>
</evidence>
<accession>A9HJ86</accession>
<accession>B5ZK15</accession>
<name>TPIS_GLUDA</name>
<dbReference type="EC" id="5.3.1.1" evidence="1"/>
<dbReference type="EMBL" id="AM889285">
    <property type="protein sequence ID" value="CAP55875.1"/>
    <property type="molecule type" value="Genomic_DNA"/>
</dbReference>
<dbReference type="EMBL" id="CP001189">
    <property type="protein sequence ID" value="ACI49954.1"/>
    <property type="molecule type" value="Genomic_DNA"/>
</dbReference>
<dbReference type="RefSeq" id="WP_012225564.1">
    <property type="nucleotide sequence ID" value="NC_010125.1"/>
</dbReference>
<dbReference type="SMR" id="A9HJ86"/>
<dbReference type="STRING" id="272568.GDI1932"/>
<dbReference type="KEGG" id="gdi:GDI1932"/>
<dbReference type="KEGG" id="gdj:Gdia_0154"/>
<dbReference type="eggNOG" id="COG0149">
    <property type="taxonomic scope" value="Bacteria"/>
</dbReference>
<dbReference type="HOGENOM" id="CLU_024251_2_1_5"/>
<dbReference type="OrthoDB" id="9809429at2"/>
<dbReference type="UniPathway" id="UPA00109">
    <property type="reaction ID" value="UER00189"/>
</dbReference>
<dbReference type="UniPathway" id="UPA00138"/>
<dbReference type="Proteomes" id="UP000001176">
    <property type="component" value="Chromosome"/>
</dbReference>
<dbReference type="GO" id="GO:0005829">
    <property type="term" value="C:cytosol"/>
    <property type="evidence" value="ECO:0007669"/>
    <property type="project" value="TreeGrafter"/>
</dbReference>
<dbReference type="GO" id="GO:0004807">
    <property type="term" value="F:triose-phosphate isomerase activity"/>
    <property type="evidence" value="ECO:0007669"/>
    <property type="project" value="UniProtKB-UniRule"/>
</dbReference>
<dbReference type="GO" id="GO:0006094">
    <property type="term" value="P:gluconeogenesis"/>
    <property type="evidence" value="ECO:0007669"/>
    <property type="project" value="UniProtKB-UniRule"/>
</dbReference>
<dbReference type="GO" id="GO:0046166">
    <property type="term" value="P:glyceraldehyde-3-phosphate biosynthetic process"/>
    <property type="evidence" value="ECO:0007669"/>
    <property type="project" value="TreeGrafter"/>
</dbReference>
<dbReference type="GO" id="GO:0019563">
    <property type="term" value="P:glycerol catabolic process"/>
    <property type="evidence" value="ECO:0007669"/>
    <property type="project" value="TreeGrafter"/>
</dbReference>
<dbReference type="GO" id="GO:0006096">
    <property type="term" value="P:glycolytic process"/>
    <property type="evidence" value="ECO:0007669"/>
    <property type="project" value="UniProtKB-UniRule"/>
</dbReference>
<dbReference type="CDD" id="cd00311">
    <property type="entry name" value="TIM"/>
    <property type="match status" value="1"/>
</dbReference>
<dbReference type="Gene3D" id="3.20.20.70">
    <property type="entry name" value="Aldolase class I"/>
    <property type="match status" value="1"/>
</dbReference>
<dbReference type="HAMAP" id="MF_00147_B">
    <property type="entry name" value="TIM_B"/>
    <property type="match status" value="1"/>
</dbReference>
<dbReference type="InterPro" id="IPR013785">
    <property type="entry name" value="Aldolase_TIM"/>
</dbReference>
<dbReference type="InterPro" id="IPR035990">
    <property type="entry name" value="TIM_sf"/>
</dbReference>
<dbReference type="InterPro" id="IPR022896">
    <property type="entry name" value="TrioseP_Isoase_bac/euk"/>
</dbReference>
<dbReference type="InterPro" id="IPR000652">
    <property type="entry name" value="Triosephosphate_isomerase"/>
</dbReference>
<dbReference type="InterPro" id="IPR020861">
    <property type="entry name" value="Triosephosphate_isomerase_AS"/>
</dbReference>
<dbReference type="NCBIfam" id="TIGR00419">
    <property type="entry name" value="tim"/>
    <property type="match status" value="1"/>
</dbReference>
<dbReference type="PANTHER" id="PTHR21139">
    <property type="entry name" value="TRIOSEPHOSPHATE ISOMERASE"/>
    <property type="match status" value="1"/>
</dbReference>
<dbReference type="PANTHER" id="PTHR21139:SF42">
    <property type="entry name" value="TRIOSEPHOSPHATE ISOMERASE"/>
    <property type="match status" value="1"/>
</dbReference>
<dbReference type="Pfam" id="PF00121">
    <property type="entry name" value="TIM"/>
    <property type="match status" value="1"/>
</dbReference>
<dbReference type="SUPFAM" id="SSF51351">
    <property type="entry name" value="Triosephosphate isomerase (TIM)"/>
    <property type="match status" value="1"/>
</dbReference>
<dbReference type="PROSITE" id="PS00171">
    <property type="entry name" value="TIM_1"/>
    <property type="match status" value="1"/>
</dbReference>
<dbReference type="PROSITE" id="PS51440">
    <property type="entry name" value="TIM_2"/>
    <property type="match status" value="1"/>
</dbReference>
<protein>
    <recommendedName>
        <fullName evidence="1">Triosephosphate isomerase</fullName>
        <shortName evidence="1">TIM</shortName>
        <shortName evidence="1">TPI</shortName>
        <ecNumber evidence="1">5.3.1.1</ecNumber>
    </recommendedName>
    <alternativeName>
        <fullName evidence="1">Triose-phosphate isomerase</fullName>
    </alternativeName>
</protein>
<keyword id="KW-0963">Cytoplasm</keyword>
<keyword id="KW-0312">Gluconeogenesis</keyword>
<keyword id="KW-0324">Glycolysis</keyword>
<keyword id="KW-0413">Isomerase</keyword>
<keyword id="KW-1185">Reference proteome</keyword>
<gene>
    <name evidence="1" type="primary">tpiA</name>
    <name type="ordered locus">GDI1932</name>
    <name type="ordered locus">Gdia_0154</name>
</gene>
<sequence>MRQMIVGNWKMNGLGAPSRDLVGEIAEGLATIPSPPQVVVCPPFTQLAGIGPLLKGSGIALGAQDCHQAASGAHTGDISAAMLADLGVEYVVLGHSERRRDHGELDETVREKTQTALAAGLTPIVCIGETGDQKASGESRDAIGWQIQGSLPDGFSGVVAYEPVWAIGSGNPAASQDIADMMGFIRAELVRQFGAAGKTIRILYGGSVNGRDAASILPIAEVGGALVGSASLQADTFLPIVRAAVDL</sequence>
<comment type="function">
    <text evidence="1">Involved in the gluconeogenesis. Catalyzes stereospecifically the conversion of dihydroxyacetone phosphate (DHAP) to D-glyceraldehyde-3-phosphate (G3P).</text>
</comment>
<comment type="catalytic activity">
    <reaction evidence="1">
        <text>D-glyceraldehyde 3-phosphate = dihydroxyacetone phosphate</text>
        <dbReference type="Rhea" id="RHEA:18585"/>
        <dbReference type="ChEBI" id="CHEBI:57642"/>
        <dbReference type="ChEBI" id="CHEBI:59776"/>
        <dbReference type="EC" id="5.3.1.1"/>
    </reaction>
</comment>
<comment type="pathway">
    <text evidence="1">Carbohydrate biosynthesis; gluconeogenesis.</text>
</comment>
<comment type="pathway">
    <text evidence="1">Carbohydrate degradation; glycolysis; D-glyceraldehyde 3-phosphate from glycerone phosphate: step 1/1.</text>
</comment>
<comment type="subunit">
    <text evidence="1">Homodimer.</text>
</comment>
<comment type="subcellular location">
    <subcellularLocation>
        <location evidence="1">Cytoplasm</location>
    </subcellularLocation>
</comment>
<comment type="similarity">
    <text evidence="1">Belongs to the triosephosphate isomerase family.</text>
</comment>